<name>RL23_ZYMMO</name>
<proteinExistence type="inferred from homology"/>
<accession>Q5NQ62</accession>
<reference key="1">
    <citation type="journal article" date="2005" name="Nat. Biotechnol.">
        <title>The genome sequence of the ethanologenic bacterium Zymomonas mobilis ZM4.</title>
        <authorList>
            <person name="Seo J.-S."/>
            <person name="Chong H."/>
            <person name="Park H.S."/>
            <person name="Yoon K.-O."/>
            <person name="Jung C."/>
            <person name="Kim J.J."/>
            <person name="Hong J.H."/>
            <person name="Kim H."/>
            <person name="Kim J.-H."/>
            <person name="Kil J.-I."/>
            <person name="Park C.J."/>
            <person name="Oh H.-M."/>
            <person name="Lee J.-S."/>
            <person name="Jin S.-J."/>
            <person name="Um H.-W."/>
            <person name="Lee H.-J."/>
            <person name="Oh S.-J."/>
            <person name="Kim J.Y."/>
            <person name="Kang H.L."/>
            <person name="Lee S.Y."/>
            <person name="Lee K.J."/>
            <person name="Kang H.S."/>
        </authorList>
    </citation>
    <scope>NUCLEOTIDE SEQUENCE [LARGE SCALE GENOMIC DNA]</scope>
    <source>
        <strain>ATCC 31821 / ZM4 / CP4</strain>
    </source>
</reference>
<comment type="function">
    <text evidence="1">One of the early assembly proteins it binds 23S rRNA. One of the proteins that surrounds the polypeptide exit tunnel on the outside of the ribosome. Forms the main docking site for trigger factor binding to the ribosome.</text>
</comment>
<comment type="subunit">
    <text evidence="1">Part of the 50S ribosomal subunit. Contacts protein L29, and trigger factor when it is bound to the ribosome.</text>
</comment>
<comment type="similarity">
    <text evidence="1">Belongs to the universal ribosomal protein uL23 family.</text>
</comment>
<sequence>MAKSQDGVAIRHYDVVLGPHITEKSTMVSEFNAVVFKVAADATKPAIKEAVEALFGVSVKSVNTVITKGKTKKWKGRPYRRSDVKKAIVTLAEGQSIDVTTGV</sequence>
<evidence type="ECO:0000255" key="1">
    <source>
        <dbReference type="HAMAP-Rule" id="MF_01369"/>
    </source>
</evidence>
<evidence type="ECO:0000305" key="2"/>
<gene>
    <name evidence="1" type="primary">rplW</name>
    <name type="ordered locus">ZMO0519</name>
</gene>
<feature type="chain" id="PRO_0000272884" description="Large ribosomal subunit protein uL23">
    <location>
        <begin position="1"/>
        <end position="103"/>
    </location>
</feature>
<keyword id="KW-1185">Reference proteome</keyword>
<keyword id="KW-0687">Ribonucleoprotein</keyword>
<keyword id="KW-0689">Ribosomal protein</keyword>
<keyword id="KW-0694">RNA-binding</keyword>
<keyword id="KW-0699">rRNA-binding</keyword>
<organism>
    <name type="scientific">Zymomonas mobilis subsp. mobilis (strain ATCC 31821 / ZM4 / CP4)</name>
    <dbReference type="NCBI Taxonomy" id="264203"/>
    <lineage>
        <taxon>Bacteria</taxon>
        <taxon>Pseudomonadati</taxon>
        <taxon>Pseudomonadota</taxon>
        <taxon>Alphaproteobacteria</taxon>
        <taxon>Sphingomonadales</taxon>
        <taxon>Zymomonadaceae</taxon>
        <taxon>Zymomonas</taxon>
    </lineage>
</organism>
<dbReference type="EMBL" id="AE008692">
    <property type="protein sequence ID" value="AAV89143.1"/>
    <property type="molecule type" value="Genomic_DNA"/>
</dbReference>
<dbReference type="RefSeq" id="WP_011240425.1">
    <property type="nucleotide sequence ID" value="NZ_CP035711.1"/>
</dbReference>
<dbReference type="SMR" id="Q5NQ62"/>
<dbReference type="STRING" id="264203.ZMO0519"/>
<dbReference type="KEGG" id="zmo:ZMO0519"/>
<dbReference type="eggNOG" id="COG0089">
    <property type="taxonomic scope" value="Bacteria"/>
</dbReference>
<dbReference type="HOGENOM" id="CLU_037562_3_1_5"/>
<dbReference type="Proteomes" id="UP000001173">
    <property type="component" value="Chromosome"/>
</dbReference>
<dbReference type="GO" id="GO:1990904">
    <property type="term" value="C:ribonucleoprotein complex"/>
    <property type="evidence" value="ECO:0007669"/>
    <property type="project" value="UniProtKB-KW"/>
</dbReference>
<dbReference type="GO" id="GO:0005840">
    <property type="term" value="C:ribosome"/>
    <property type="evidence" value="ECO:0007669"/>
    <property type="project" value="UniProtKB-KW"/>
</dbReference>
<dbReference type="GO" id="GO:0019843">
    <property type="term" value="F:rRNA binding"/>
    <property type="evidence" value="ECO:0007669"/>
    <property type="project" value="UniProtKB-UniRule"/>
</dbReference>
<dbReference type="GO" id="GO:0003735">
    <property type="term" value="F:structural constituent of ribosome"/>
    <property type="evidence" value="ECO:0007669"/>
    <property type="project" value="InterPro"/>
</dbReference>
<dbReference type="GO" id="GO:0006412">
    <property type="term" value="P:translation"/>
    <property type="evidence" value="ECO:0007669"/>
    <property type="project" value="UniProtKB-UniRule"/>
</dbReference>
<dbReference type="FunFam" id="3.30.70.330:FF:000001">
    <property type="entry name" value="50S ribosomal protein L23"/>
    <property type="match status" value="1"/>
</dbReference>
<dbReference type="Gene3D" id="3.30.70.330">
    <property type="match status" value="1"/>
</dbReference>
<dbReference type="HAMAP" id="MF_01369_B">
    <property type="entry name" value="Ribosomal_uL23_B"/>
    <property type="match status" value="1"/>
</dbReference>
<dbReference type="InterPro" id="IPR012677">
    <property type="entry name" value="Nucleotide-bd_a/b_plait_sf"/>
</dbReference>
<dbReference type="InterPro" id="IPR013025">
    <property type="entry name" value="Ribosomal_uL23-like"/>
</dbReference>
<dbReference type="InterPro" id="IPR012678">
    <property type="entry name" value="Ribosomal_uL23/eL15/eS24_sf"/>
</dbReference>
<dbReference type="InterPro" id="IPR001014">
    <property type="entry name" value="Ribosomal_uL23_CS"/>
</dbReference>
<dbReference type="NCBIfam" id="NF004359">
    <property type="entry name" value="PRK05738.1-3"/>
    <property type="match status" value="1"/>
</dbReference>
<dbReference type="NCBIfam" id="NF004360">
    <property type="entry name" value="PRK05738.1-5"/>
    <property type="match status" value="1"/>
</dbReference>
<dbReference type="NCBIfam" id="NF004363">
    <property type="entry name" value="PRK05738.2-4"/>
    <property type="match status" value="1"/>
</dbReference>
<dbReference type="PANTHER" id="PTHR11620">
    <property type="entry name" value="60S RIBOSOMAL PROTEIN L23A"/>
    <property type="match status" value="1"/>
</dbReference>
<dbReference type="Pfam" id="PF00276">
    <property type="entry name" value="Ribosomal_L23"/>
    <property type="match status" value="1"/>
</dbReference>
<dbReference type="SUPFAM" id="SSF54189">
    <property type="entry name" value="Ribosomal proteins S24e, L23 and L15e"/>
    <property type="match status" value="1"/>
</dbReference>
<dbReference type="PROSITE" id="PS00050">
    <property type="entry name" value="RIBOSOMAL_L23"/>
    <property type="match status" value="1"/>
</dbReference>
<protein>
    <recommendedName>
        <fullName evidence="1">Large ribosomal subunit protein uL23</fullName>
    </recommendedName>
    <alternativeName>
        <fullName evidence="2">50S ribosomal protein L23</fullName>
    </alternativeName>
</protein>